<dbReference type="EC" id="4.3.2.1" evidence="1"/>
<dbReference type="EMBL" id="CP000854">
    <property type="protein sequence ID" value="ACC40919.1"/>
    <property type="molecule type" value="Genomic_DNA"/>
</dbReference>
<dbReference type="RefSeq" id="WP_012394210.1">
    <property type="nucleotide sequence ID" value="NC_010612.1"/>
</dbReference>
<dbReference type="SMR" id="B2HR33"/>
<dbReference type="STRING" id="216594.MMAR_2469"/>
<dbReference type="KEGG" id="mmi:MMAR_2469"/>
<dbReference type="eggNOG" id="COG0165">
    <property type="taxonomic scope" value="Bacteria"/>
</dbReference>
<dbReference type="HOGENOM" id="CLU_027272_2_2_11"/>
<dbReference type="OrthoDB" id="9769623at2"/>
<dbReference type="UniPathway" id="UPA00068">
    <property type="reaction ID" value="UER00114"/>
</dbReference>
<dbReference type="Proteomes" id="UP000001190">
    <property type="component" value="Chromosome"/>
</dbReference>
<dbReference type="GO" id="GO:0005829">
    <property type="term" value="C:cytosol"/>
    <property type="evidence" value="ECO:0007669"/>
    <property type="project" value="TreeGrafter"/>
</dbReference>
<dbReference type="GO" id="GO:0004056">
    <property type="term" value="F:argininosuccinate lyase activity"/>
    <property type="evidence" value="ECO:0007669"/>
    <property type="project" value="UniProtKB-UniRule"/>
</dbReference>
<dbReference type="GO" id="GO:0042450">
    <property type="term" value="P:arginine biosynthetic process via ornithine"/>
    <property type="evidence" value="ECO:0007669"/>
    <property type="project" value="InterPro"/>
</dbReference>
<dbReference type="GO" id="GO:0006526">
    <property type="term" value="P:L-arginine biosynthetic process"/>
    <property type="evidence" value="ECO:0007669"/>
    <property type="project" value="UniProtKB-UniRule"/>
</dbReference>
<dbReference type="CDD" id="cd01359">
    <property type="entry name" value="Argininosuccinate_lyase"/>
    <property type="match status" value="1"/>
</dbReference>
<dbReference type="FunFam" id="1.10.40.30:FF:000001">
    <property type="entry name" value="Argininosuccinate lyase"/>
    <property type="match status" value="1"/>
</dbReference>
<dbReference type="FunFam" id="1.20.200.10:FF:000015">
    <property type="entry name" value="argininosuccinate lyase isoform X2"/>
    <property type="match status" value="1"/>
</dbReference>
<dbReference type="Gene3D" id="1.10.40.30">
    <property type="entry name" value="Fumarase/aspartase (C-terminal domain)"/>
    <property type="match status" value="1"/>
</dbReference>
<dbReference type="Gene3D" id="1.20.200.10">
    <property type="entry name" value="Fumarase/aspartase (Central domain)"/>
    <property type="match status" value="1"/>
</dbReference>
<dbReference type="Gene3D" id="1.10.275.10">
    <property type="entry name" value="Fumarase/aspartase (N-terminal domain)"/>
    <property type="match status" value="1"/>
</dbReference>
<dbReference type="HAMAP" id="MF_00006">
    <property type="entry name" value="Arg_succ_lyase"/>
    <property type="match status" value="1"/>
</dbReference>
<dbReference type="InterPro" id="IPR029419">
    <property type="entry name" value="Arg_succ_lyase_C"/>
</dbReference>
<dbReference type="InterPro" id="IPR009049">
    <property type="entry name" value="Argininosuccinate_lyase"/>
</dbReference>
<dbReference type="InterPro" id="IPR024083">
    <property type="entry name" value="Fumarase/histidase_N"/>
</dbReference>
<dbReference type="InterPro" id="IPR020557">
    <property type="entry name" value="Fumarate_lyase_CS"/>
</dbReference>
<dbReference type="InterPro" id="IPR000362">
    <property type="entry name" value="Fumarate_lyase_fam"/>
</dbReference>
<dbReference type="InterPro" id="IPR022761">
    <property type="entry name" value="Fumarate_lyase_N"/>
</dbReference>
<dbReference type="InterPro" id="IPR008948">
    <property type="entry name" value="L-Aspartase-like"/>
</dbReference>
<dbReference type="NCBIfam" id="TIGR00838">
    <property type="entry name" value="argH"/>
    <property type="match status" value="1"/>
</dbReference>
<dbReference type="PANTHER" id="PTHR43814">
    <property type="entry name" value="ARGININOSUCCINATE LYASE"/>
    <property type="match status" value="1"/>
</dbReference>
<dbReference type="PANTHER" id="PTHR43814:SF1">
    <property type="entry name" value="ARGININOSUCCINATE LYASE"/>
    <property type="match status" value="1"/>
</dbReference>
<dbReference type="Pfam" id="PF14698">
    <property type="entry name" value="ASL_C2"/>
    <property type="match status" value="1"/>
</dbReference>
<dbReference type="Pfam" id="PF00206">
    <property type="entry name" value="Lyase_1"/>
    <property type="match status" value="1"/>
</dbReference>
<dbReference type="PRINTS" id="PR00145">
    <property type="entry name" value="ARGSUCLYASE"/>
</dbReference>
<dbReference type="PRINTS" id="PR00149">
    <property type="entry name" value="FUMRATELYASE"/>
</dbReference>
<dbReference type="SUPFAM" id="SSF48557">
    <property type="entry name" value="L-aspartase-like"/>
    <property type="match status" value="1"/>
</dbReference>
<dbReference type="PROSITE" id="PS00163">
    <property type="entry name" value="FUMARATE_LYASES"/>
    <property type="match status" value="1"/>
</dbReference>
<proteinExistence type="inferred from homology"/>
<feature type="chain" id="PRO_1000089097" description="Argininosuccinate lyase">
    <location>
        <begin position="1"/>
        <end position="470"/>
    </location>
</feature>
<name>ARLY_MYCMM</name>
<reference key="1">
    <citation type="journal article" date="2008" name="Genome Res.">
        <title>Insights from the complete genome sequence of Mycobacterium marinum on the evolution of Mycobacterium tuberculosis.</title>
        <authorList>
            <person name="Stinear T.P."/>
            <person name="Seemann T."/>
            <person name="Harrison P.F."/>
            <person name="Jenkin G.A."/>
            <person name="Davies J.K."/>
            <person name="Johnson P.D."/>
            <person name="Abdellah Z."/>
            <person name="Arrowsmith C."/>
            <person name="Chillingworth T."/>
            <person name="Churcher C."/>
            <person name="Clarke K."/>
            <person name="Cronin A."/>
            <person name="Davis P."/>
            <person name="Goodhead I."/>
            <person name="Holroyd N."/>
            <person name="Jagels K."/>
            <person name="Lord A."/>
            <person name="Moule S."/>
            <person name="Mungall K."/>
            <person name="Norbertczak H."/>
            <person name="Quail M.A."/>
            <person name="Rabbinowitsch E."/>
            <person name="Walker D."/>
            <person name="White B."/>
            <person name="Whitehead S."/>
            <person name="Small P.L."/>
            <person name="Brosch R."/>
            <person name="Ramakrishnan L."/>
            <person name="Fischbach M.A."/>
            <person name="Parkhill J."/>
            <person name="Cole S.T."/>
        </authorList>
    </citation>
    <scope>NUCLEOTIDE SEQUENCE [LARGE SCALE GENOMIC DNA]</scope>
    <source>
        <strain>ATCC BAA-535 / M</strain>
    </source>
</reference>
<keyword id="KW-0028">Amino-acid biosynthesis</keyword>
<keyword id="KW-0055">Arginine biosynthesis</keyword>
<keyword id="KW-0963">Cytoplasm</keyword>
<keyword id="KW-0456">Lyase</keyword>
<keyword id="KW-1185">Reference proteome</keyword>
<evidence type="ECO:0000255" key="1">
    <source>
        <dbReference type="HAMAP-Rule" id="MF_00006"/>
    </source>
</evidence>
<accession>B2HR33</accession>
<gene>
    <name evidence="1" type="primary">argH</name>
    <name type="ordered locus">MMAR_2469</name>
</gene>
<comment type="catalytic activity">
    <reaction evidence="1">
        <text>2-(N(omega)-L-arginino)succinate = fumarate + L-arginine</text>
        <dbReference type="Rhea" id="RHEA:24020"/>
        <dbReference type="ChEBI" id="CHEBI:29806"/>
        <dbReference type="ChEBI" id="CHEBI:32682"/>
        <dbReference type="ChEBI" id="CHEBI:57472"/>
        <dbReference type="EC" id="4.3.2.1"/>
    </reaction>
</comment>
<comment type="pathway">
    <text evidence="1">Amino-acid biosynthesis; L-arginine biosynthesis; L-arginine from L-ornithine and carbamoyl phosphate: step 3/3.</text>
</comment>
<comment type="subcellular location">
    <subcellularLocation>
        <location evidence="1">Cytoplasm</location>
    </subcellularLocation>
</comment>
<comment type="similarity">
    <text evidence="1">Belongs to the lyase 1 family. Argininosuccinate lyase subfamily.</text>
</comment>
<organism>
    <name type="scientific">Mycobacterium marinum (strain ATCC BAA-535 / M)</name>
    <dbReference type="NCBI Taxonomy" id="216594"/>
    <lineage>
        <taxon>Bacteria</taxon>
        <taxon>Bacillati</taxon>
        <taxon>Actinomycetota</taxon>
        <taxon>Actinomycetes</taxon>
        <taxon>Mycobacteriales</taxon>
        <taxon>Mycobacteriaceae</taxon>
        <taxon>Mycobacterium</taxon>
        <taxon>Mycobacterium ulcerans group</taxon>
    </lineage>
</organism>
<protein>
    <recommendedName>
        <fullName evidence="1">Argininosuccinate lyase</fullName>
        <shortName evidence="1">ASAL</shortName>
        <ecNumber evidence="1">4.3.2.1</ecNumber>
    </recommendedName>
    <alternativeName>
        <fullName evidence="1">Arginosuccinase</fullName>
    </alternativeName>
</protein>
<sequence>MSTNQGSLWGGRFAGGPSDALAALSKSTHFDWALAPYDVTASRAHAVVLFRAGLLTEEQRDGLLAGLDSLASDVADGSFGPLVSDEDVHAALERGLIERVGPDLGGRLRAGRSRNDQVATLFRMWLRDAVRRVATGVLEVVAALGDQAAAHPTAIMPGKTHLQSAQPILLAHHLLAHAHPLLRDVERIVDFDKRAAVSPYGSGALAGSSLGLDPDAIAADLGFTTAADNSVDATASRDFAAEAAFIFAMIAVDLSRLAEDIIIWSSTEFGYVTLHDSWSTGSSIMPQKKNPDIAELARGKSGRLIGNLTGLLATLKAQPLAYNRDLQEDKEPVFDSVVQLELLLPAMAGLVGSLTFDVERMAALAPAGYTLATDVAEWLVRQGVPFRSAHEAAGAAVRTAEERSVGLEELTDDELAAISPELTPQVRDVLTIEGSVSARDSRGGTAPKRVAEQLQIVREITARLGHELMR</sequence>